<proteinExistence type="inferred from homology"/>
<name>RECR_SYNC1</name>
<gene>
    <name evidence="1" type="primary">recR</name>
    <name type="ordered locus">Pcar_0376</name>
</gene>
<organism>
    <name type="scientific">Syntrophotalea carbinolica (strain DSM 2380 / NBRC 103641 / GraBd1)</name>
    <name type="common">Pelobacter carbinolicus</name>
    <dbReference type="NCBI Taxonomy" id="338963"/>
    <lineage>
        <taxon>Bacteria</taxon>
        <taxon>Pseudomonadati</taxon>
        <taxon>Thermodesulfobacteriota</taxon>
        <taxon>Desulfuromonadia</taxon>
        <taxon>Desulfuromonadales</taxon>
        <taxon>Syntrophotaleaceae</taxon>
        <taxon>Syntrophotalea</taxon>
    </lineage>
</organism>
<dbReference type="EMBL" id="CP000142">
    <property type="protein sequence ID" value="ABA87636.1"/>
    <property type="molecule type" value="Genomic_DNA"/>
</dbReference>
<dbReference type="RefSeq" id="WP_011340057.1">
    <property type="nucleotide sequence ID" value="NC_007498.2"/>
</dbReference>
<dbReference type="SMR" id="Q3A7K8"/>
<dbReference type="STRING" id="338963.Pcar_0376"/>
<dbReference type="KEGG" id="pca:Pcar_0376"/>
<dbReference type="eggNOG" id="COG0353">
    <property type="taxonomic scope" value="Bacteria"/>
</dbReference>
<dbReference type="HOGENOM" id="CLU_060739_1_0_7"/>
<dbReference type="OrthoDB" id="9802672at2"/>
<dbReference type="Proteomes" id="UP000002534">
    <property type="component" value="Chromosome"/>
</dbReference>
<dbReference type="GO" id="GO:0003677">
    <property type="term" value="F:DNA binding"/>
    <property type="evidence" value="ECO:0007669"/>
    <property type="project" value="UniProtKB-UniRule"/>
</dbReference>
<dbReference type="GO" id="GO:0008270">
    <property type="term" value="F:zinc ion binding"/>
    <property type="evidence" value="ECO:0007669"/>
    <property type="project" value="UniProtKB-KW"/>
</dbReference>
<dbReference type="GO" id="GO:0006310">
    <property type="term" value="P:DNA recombination"/>
    <property type="evidence" value="ECO:0007669"/>
    <property type="project" value="UniProtKB-UniRule"/>
</dbReference>
<dbReference type="GO" id="GO:0006281">
    <property type="term" value="P:DNA repair"/>
    <property type="evidence" value="ECO:0007669"/>
    <property type="project" value="UniProtKB-UniRule"/>
</dbReference>
<dbReference type="CDD" id="cd01025">
    <property type="entry name" value="TOPRIM_recR"/>
    <property type="match status" value="1"/>
</dbReference>
<dbReference type="Gene3D" id="3.40.1360.10">
    <property type="match status" value="1"/>
</dbReference>
<dbReference type="Gene3D" id="6.10.250.240">
    <property type="match status" value="1"/>
</dbReference>
<dbReference type="Gene3D" id="1.10.8.420">
    <property type="entry name" value="RecR Domain 1"/>
    <property type="match status" value="1"/>
</dbReference>
<dbReference type="HAMAP" id="MF_00017">
    <property type="entry name" value="RecR"/>
    <property type="match status" value="1"/>
</dbReference>
<dbReference type="InterPro" id="IPR000093">
    <property type="entry name" value="DNA_Rcmb_RecR"/>
</dbReference>
<dbReference type="InterPro" id="IPR023627">
    <property type="entry name" value="Rcmb_RecR"/>
</dbReference>
<dbReference type="InterPro" id="IPR015967">
    <property type="entry name" value="Rcmb_RecR_Znf"/>
</dbReference>
<dbReference type="InterPro" id="IPR006171">
    <property type="entry name" value="TOPRIM_dom"/>
</dbReference>
<dbReference type="InterPro" id="IPR034137">
    <property type="entry name" value="TOPRIM_RecR"/>
</dbReference>
<dbReference type="NCBIfam" id="TIGR00615">
    <property type="entry name" value="recR"/>
    <property type="match status" value="1"/>
</dbReference>
<dbReference type="PANTHER" id="PTHR30446">
    <property type="entry name" value="RECOMBINATION PROTEIN RECR"/>
    <property type="match status" value="1"/>
</dbReference>
<dbReference type="PANTHER" id="PTHR30446:SF0">
    <property type="entry name" value="RECOMBINATION PROTEIN RECR"/>
    <property type="match status" value="1"/>
</dbReference>
<dbReference type="Pfam" id="PF21175">
    <property type="entry name" value="RecR_C"/>
    <property type="match status" value="1"/>
</dbReference>
<dbReference type="Pfam" id="PF21176">
    <property type="entry name" value="RecR_HhH"/>
    <property type="match status" value="1"/>
</dbReference>
<dbReference type="Pfam" id="PF02132">
    <property type="entry name" value="RecR_ZnF"/>
    <property type="match status" value="1"/>
</dbReference>
<dbReference type="Pfam" id="PF13662">
    <property type="entry name" value="Toprim_4"/>
    <property type="match status" value="1"/>
</dbReference>
<dbReference type="SMART" id="SM00493">
    <property type="entry name" value="TOPRIM"/>
    <property type="match status" value="1"/>
</dbReference>
<dbReference type="SUPFAM" id="SSF111304">
    <property type="entry name" value="Recombination protein RecR"/>
    <property type="match status" value="1"/>
</dbReference>
<dbReference type="PROSITE" id="PS01300">
    <property type="entry name" value="RECR"/>
    <property type="match status" value="1"/>
</dbReference>
<dbReference type="PROSITE" id="PS50880">
    <property type="entry name" value="TOPRIM"/>
    <property type="match status" value="1"/>
</dbReference>
<sequence>MVKFTPSFNRLVGEFAKLPGIGRKTAVRLTLFMLRQTSQDALALGEAVRELKERTRFCSRCFYFTEEDPCPLCTDVGRDDQLICVVEEPQDVIAIERSRSFRGRYHVLHGSLSPLDGIGPDDLKIDALLERLQQNNVKEVLLATNFDVEGEATALYLAKVIQPFGVKVTRLAHGIPTGSDLEYVDEATVNHAVEGRREL</sequence>
<comment type="function">
    <text evidence="1">May play a role in DNA repair. It seems to be involved in an RecBC-independent recombinational process of DNA repair. It may act with RecF and RecO.</text>
</comment>
<comment type="similarity">
    <text evidence="1">Belongs to the RecR family.</text>
</comment>
<protein>
    <recommendedName>
        <fullName evidence="1">Recombination protein RecR</fullName>
    </recommendedName>
</protein>
<feature type="chain" id="PRO_1000001573" description="Recombination protein RecR">
    <location>
        <begin position="1"/>
        <end position="199"/>
    </location>
</feature>
<feature type="domain" description="Toprim" evidence="1">
    <location>
        <begin position="81"/>
        <end position="176"/>
    </location>
</feature>
<feature type="zinc finger region" description="C4-type" evidence="1">
    <location>
        <begin position="58"/>
        <end position="73"/>
    </location>
</feature>
<accession>Q3A7K8</accession>
<keyword id="KW-0227">DNA damage</keyword>
<keyword id="KW-0233">DNA recombination</keyword>
<keyword id="KW-0234">DNA repair</keyword>
<keyword id="KW-0479">Metal-binding</keyword>
<keyword id="KW-1185">Reference proteome</keyword>
<keyword id="KW-0862">Zinc</keyword>
<keyword id="KW-0863">Zinc-finger</keyword>
<evidence type="ECO:0000255" key="1">
    <source>
        <dbReference type="HAMAP-Rule" id="MF_00017"/>
    </source>
</evidence>
<reference key="1">
    <citation type="submission" date="2005-10" db="EMBL/GenBank/DDBJ databases">
        <title>Complete sequence of Pelobacter carbinolicus DSM 2380.</title>
        <authorList>
            <person name="Copeland A."/>
            <person name="Lucas S."/>
            <person name="Lapidus A."/>
            <person name="Barry K."/>
            <person name="Detter J.C."/>
            <person name="Glavina T."/>
            <person name="Hammon N."/>
            <person name="Israni S."/>
            <person name="Pitluck S."/>
            <person name="Chertkov O."/>
            <person name="Schmutz J."/>
            <person name="Larimer F."/>
            <person name="Land M."/>
            <person name="Kyrpides N."/>
            <person name="Ivanova N."/>
            <person name="Richardson P."/>
        </authorList>
    </citation>
    <scope>NUCLEOTIDE SEQUENCE [LARGE SCALE GENOMIC DNA]</scope>
    <source>
        <strain>DSM 2380 / NBRC 103641 / GraBd1</strain>
    </source>
</reference>